<protein>
    <recommendedName>
        <fullName>Dehydration-responsive element-binding protein 1E</fullName>
        <shortName>Protein DREB1E</shortName>
    </recommendedName>
</protein>
<dbReference type="EMBL" id="CR855158">
    <property type="protein sequence ID" value="CAH66953.1"/>
    <property type="molecule type" value="Genomic_DNA"/>
</dbReference>
<dbReference type="EMBL" id="CM000129">
    <property type="protein sequence ID" value="EAY95226.1"/>
    <property type="molecule type" value="Genomic_DNA"/>
</dbReference>
<dbReference type="SMR" id="A2XWL6"/>
<dbReference type="STRING" id="39946.A2XWL6"/>
<dbReference type="EnsemblPlants" id="BGIOSGA016950-TA">
    <property type="protein sequence ID" value="BGIOSGA016950-PA"/>
    <property type="gene ID" value="BGIOSGA016950"/>
</dbReference>
<dbReference type="EnsemblPlants" id="OsGoSa_04g0023180.01">
    <property type="protein sequence ID" value="OsGoSa_04g0023180.01"/>
    <property type="gene ID" value="OsGoSa_04g0023180"/>
</dbReference>
<dbReference type="EnsemblPlants" id="OsIR64_04g0022730.01">
    <property type="protein sequence ID" value="OsIR64_04g0022730.01"/>
    <property type="gene ID" value="OsIR64_04g0022730"/>
</dbReference>
<dbReference type="EnsemblPlants" id="OsKYG_04g0023060.01">
    <property type="protein sequence ID" value="OsKYG_04g0023060.01"/>
    <property type="gene ID" value="OsKYG_04g0023060"/>
</dbReference>
<dbReference type="EnsemblPlants" id="OsLaMu_04g0023780.01">
    <property type="protein sequence ID" value="OsLaMu_04g0023780.01"/>
    <property type="gene ID" value="OsLaMu_04g0023780"/>
</dbReference>
<dbReference type="EnsemblPlants" id="OsLima_04g0023230.01">
    <property type="protein sequence ID" value="OsLima_04g0023230.01"/>
    <property type="gene ID" value="OsLima_04g0023230"/>
</dbReference>
<dbReference type="EnsemblPlants" id="OsLiXu_04g0023580.01">
    <property type="protein sequence ID" value="OsLiXu_04g0023580.01"/>
    <property type="gene ID" value="OsLiXu_04g0023580"/>
</dbReference>
<dbReference type="EnsemblPlants" id="OsMH63_04G024090_01">
    <property type="protein sequence ID" value="OsMH63_04G024090_01"/>
    <property type="gene ID" value="OsMH63_04G024090"/>
</dbReference>
<dbReference type="EnsemblPlants" id="OsPr106_04g0023960.01">
    <property type="protein sequence ID" value="OsPr106_04g0023960.01"/>
    <property type="gene ID" value="OsPr106_04g0023960"/>
</dbReference>
<dbReference type="EnsemblPlants" id="OsZS97_04G024110_01">
    <property type="protein sequence ID" value="OsZS97_04G024110_01"/>
    <property type="gene ID" value="OsZS97_04G024110"/>
</dbReference>
<dbReference type="Gramene" id="BGIOSGA016950-TA">
    <property type="protein sequence ID" value="BGIOSGA016950-PA"/>
    <property type="gene ID" value="BGIOSGA016950"/>
</dbReference>
<dbReference type="Gramene" id="OsGoSa_04g0023180.01">
    <property type="protein sequence ID" value="OsGoSa_04g0023180.01"/>
    <property type="gene ID" value="OsGoSa_04g0023180"/>
</dbReference>
<dbReference type="Gramene" id="OsIR64_04g0022730.01">
    <property type="protein sequence ID" value="OsIR64_04g0022730.01"/>
    <property type="gene ID" value="OsIR64_04g0022730"/>
</dbReference>
<dbReference type="Gramene" id="OsKYG_04g0023060.01">
    <property type="protein sequence ID" value="OsKYG_04g0023060.01"/>
    <property type="gene ID" value="OsKYG_04g0023060"/>
</dbReference>
<dbReference type="Gramene" id="OsLaMu_04g0023780.01">
    <property type="protein sequence ID" value="OsLaMu_04g0023780.01"/>
    <property type="gene ID" value="OsLaMu_04g0023780"/>
</dbReference>
<dbReference type="Gramene" id="OsLima_04g0023230.01">
    <property type="protein sequence ID" value="OsLima_04g0023230.01"/>
    <property type="gene ID" value="OsLima_04g0023230"/>
</dbReference>
<dbReference type="Gramene" id="OsLiXu_04g0023580.01">
    <property type="protein sequence ID" value="OsLiXu_04g0023580.01"/>
    <property type="gene ID" value="OsLiXu_04g0023580"/>
</dbReference>
<dbReference type="Gramene" id="OsMH63_04G024090_01">
    <property type="protein sequence ID" value="OsMH63_04G024090_01"/>
    <property type="gene ID" value="OsMH63_04G024090"/>
</dbReference>
<dbReference type="Gramene" id="OsPr106_04g0023960.01">
    <property type="protein sequence ID" value="OsPr106_04g0023960.01"/>
    <property type="gene ID" value="OsPr106_04g0023960"/>
</dbReference>
<dbReference type="Gramene" id="OsZS97_04G024110_01">
    <property type="protein sequence ID" value="OsZS97_04G024110_01"/>
    <property type="gene ID" value="OsZS97_04G024110"/>
</dbReference>
<dbReference type="HOGENOM" id="CLU_063331_1_0_1"/>
<dbReference type="OMA" id="MDWAYYG"/>
<dbReference type="OrthoDB" id="676764at2759"/>
<dbReference type="Proteomes" id="UP000007015">
    <property type="component" value="Chromosome 4"/>
</dbReference>
<dbReference type="GO" id="GO:0005634">
    <property type="term" value="C:nucleus"/>
    <property type="evidence" value="ECO:0007669"/>
    <property type="project" value="UniProtKB-SubCell"/>
</dbReference>
<dbReference type="GO" id="GO:0003677">
    <property type="term" value="F:DNA binding"/>
    <property type="evidence" value="ECO:0007669"/>
    <property type="project" value="UniProtKB-KW"/>
</dbReference>
<dbReference type="GO" id="GO:0003700">
    <property type="term" value="F:DNA-binding transcription factor activity"/>
    <property type="evidence" value="ECO:0007669"/>
    <property type="project" value="InterPro"/>
</dbReference>
<dbReference type="CDD" id="cd00018">
    <property type="entry name" value="AP2"/>
    <property type="match status" value="1"/>
</dbReference>
<dbReference type="FunFam" id="3.30.730.10:FF:000001">
    <property type="entry name" value="Ethylene-responsive transcription factor 2"/>
    <property type="match status" value="1"/>
</dbReference>
<dbReference type="Gene3D" id="3.30.730.10">
    <property type="entry name" value="AP2/ERF domain"/>
    <property type="match status" value="1"/>
</dbReference>
<dbReference type="InterPro" id="IPR001471">
    <property type="entry name" value="AP2/ERF_dom"/>
</dbReference>
<dbReference type="InterPro" id="IPR036955">
    <property type="entry name" value="AP2/ERF_dom_sf"/>
</dbReference>
<dbReference type="InterPro" id="IPR016177">
    <property type="entry name" value="DNA-bd_dom_sf"/>
</dbReference>
<dbReference type="InterPro" id="IPR045277">
    <property type="entry name" value="DRE1A-I"/>
</dbReference>
<dbReference type="PANTHER" id="PTHR31839">
    <property type="entry name" value="DEHYDRATION-RESPONSIVE ELEMENT-BINDING PROTEIN 1D"/>
    <property type="match status" value="1"/>
</dbReference>
<dbReference type="PANTHER" id="PTHR31839:SF21">
    <property type="entry name" value="DEHYDRATION-RESPONSIVE ELEMENT-BINDING PROTEIN 1E"/>
    <property type="match status" value="1"/>
</dbReference>
<dbReference type="Pfam" id="PF00847">
    <property type="entry name" value="AP2"/>
    <property type="match status" value="1"/>
</dbReference>
<dbReference type="PRINTS" id="PR00367">
    <property type="entry name" value="ETHRSPELEMNT"/>
</dbReference>
<dbReference type="SMART" id="SM00380">
    <property type="entry name" value="AP2"/>
    <property type="match status" value="1"/>
</dbReference>
<dbReference type="SUPFAM" id="SSF54171">
    <property type="entry name" value="DNA-binding domain"/>
    <property type="match status" value="1"/>
</dbReference>
<dbReference type="PROSITE" id="PS51032">
    <property type="entry name" value="AP2_ERF"/>
    <property type="match status" value="1"/>
</dbReference>
<comment type="function">
    <text evidence="1">Transcriptional activator that binds specifically to the DNA sequence 5'-[AG]CCGAC-3'. Binding to the C-repeat/DRE element mediates high salinity- and dehydration-inducible transcription (By similarity).</text>
</comment>
<comment type="subcellular location">
    <subcellularLocation>
        <location evidence="4">Nucleus</location>
    </subcellularLocation>
</comment>
<comment type="similarity">
    <text evidence="4">Belongs to the AP2/ERF transcription factor family. ERF subfamily.</text>
</comment>
<gene>
    <name type="primary">DREB1E</name>
    <name type="synonym">ERF30</name>
    <name type="ORF">OsI_016459</name>
    <name type="ORF">OSIGBa0147H17.1</name>
</gene>
<feature type="chain" id="PRO_0000323034" description="Dehydration-responsive element-binding protein 1E">
    <location>
        <begin position="1"/>
        <end position="219"/>
    </location>
</feature>
<feature type="DNA-binding region" description="AP2/ERF" evidence="2">
    <location>
        <begin position="52"/>
        <end position="109"/>
    </location>
</feature>
<feature type="region of interest" description="Disordered" evidence="3">
    <location>
        <begin position="1"/>
        <end position="44"/>
    </location>
</feature>
<feature type="compositionally biased region" description="Low complexity" evidence="3">
    <location>
        <begin position="1"/>
        <end position="19"/>
    </location>
</feature>
<proteinExistence type="inferred from homology"/>
<reference key="1">
    <citation type="journal article" date="2002" name="Nature">
        <title>Sequence and analysis of rice chromosome 4.</title>
        <authorList>
            <person name="Feng Q."/>
            <person name="Zhang Y."/>
            <person name="Hao P."/>
            <person name="Wang S."/>
            <person name="Fu G."/>
            <person name="Huang Y."/>
            <person name="Li Y."/>
            <person name="Zhu J."/>
            <person name="Liu Y."/>
            <person name="Hu X."/>
            <person name="Jia P."/>
            <person name="Zhang Y."/>
            <person name="Zhao Q."/>
            <person name="Ying K."/>
            <person name="Yu S."/>
            <person name="Tang Y."/>
            <person name="Weng Q."/>
            <person name="Zhang L."/>
            <person name="Lu Y."/>
            <person name="Mu J."/>
            <person name="Lu Y."/>
            <person name="Zhang L.S."/>
            <person name="Yu Z."/>
            <person name="Fan D."/>
            <person name="Liu X."/>
            <person name="Lu T."/>
            <person name="Li C."/>
            <person name="Wu Y."/>
            <person name="Sun T."/>
            <person name="Lei H."/>
            <person name="Li T."/>
            <person name="Hu H."/>
            <person name="Guan J."/>
            <person name="Wu M."/>
            <person name="Zhang R."/>
            <person name="Zhou B."/>
            <person name="Chen Z."/>
            <person name="Chen L."/>
            <person name="Jin Z."/>
            <person name="Wang R."/>
            <person name="Yin H."/>
            <person name="Cai Z."/>
            <person name="Ren S."/>
            <person name="Lv G."/>
            <person name="Gu W."/>
            <person name="Zhu G."/>
            <person name="Tu Y."/>
            <person name="Jia J."/>
            <person name="Zhang Y."/>
            <person name="Chen J."/>
            <person name="Kang H."/>
            <person name="Chen X."/>
            <person name="Shao C."/>
            <person name="Sun Y."/>
            <person name="Hu Q."/>
            <person name="Zhang X."/>
            <person name="Zhang W."/>
            <person name="Wang L."/>
            <person name="Ding C."/>
            <person name="Sheng H."/>
            <person name="Gu J."/>
            <person name="Chen S."/>
            <person name="Ni L."/>
            <person name="Zhu F."/>
            <person name="Chen W."/>
            <person name="Lan L."/>
            <person name="Lai Y."/>
            <person name="Cheng Z."/>
            <person name="Gu M."/>
            <person name="Jiang J."/>
            <person name="Li J."/>
            <person name="Hong G."/>
            <person name="Xue Y."/>
            <person name="Han B."/>
        </authorList>
    </citation>
    <scope>NUCLEOTIDE SEQUENCE [LARGE SCALE GENOMIC DNA]</scope>
    <source>
        <strain>cv. Guang-Lu-Ai No.4</strain>
    </source>
</reference>
<reference key="2">
    <citation type="journal article" date="2005" name="PLoS Biol.">
        <title>The genomes of Oryza sativa: a history of duplications.</title>
        <authorList>
            <person name="Yu J."/>
            <person name="Wang J."/>
            <person name="Lin W."/>
            <person name="Li S."/>
            <person name="Li H."/>
            <person name="Zhou J."/>
            <person name="Ni P."/>
            <person name="Dong W."/>
            <person name="Hu S."/>
            <person name="Zeng C."/>
            <person name="Zhang J."/>
            <person name="Zhang Y."/>
            <person name="Li R."/>
            <person name="Xu Z."/>
            <person name="Li S."/>
            <person name="Li X."/>
            <person name="Zheng H."/>
            <person name="Cong L."/>
            <person name="Lin L."/>
            <person name="Yin J."/>
            <person name="Geng J."/>
            <person name="Li G."/>
            <person name="Shi J."/>
            <person name="Liu J."/>
            <person name="Lv H."/>
            <person name="Li J."/>
            <person name="Wang J."/>
            <person name="Deng Y."/>
            <person name="Ran L."/>
            <person name="Shi X."/>
            <person name="Wang X."/>
            <person name="Wu Q."/>
            <person name="Li C."/>
            <person name="Ren X."/>
            <person name="Wang J."/>
            <person name="Wang X."/>
            <person name="Li D."/>
            <person name="Liu D."/>
            <person name="Zhang X."/>
            <person name="Ji Z."/>
            <person name="Zhao W."/>
            <person name="Sun Y."/>
            <person name="Zhang Z."/>
            <person name="Bao J."/>
            <person name="Han Y."/>
            <person name="Dong L."/>
            <person name="Ji J."/>
            <person name="Chen P."/>
            <person name="Wu S."/>
            <person name="Liu J."/>
            <person name="Xiao Y."/>
            <person name="Bu D."/>
            <person name="Tan J."/>
            <person name="Yang L."/>
            <person name="Ye C."/>
            <person name="Zhang J."/>
            <person name="Xu J."/>
            <person name="Zhou Y."/>
            <person name="Yu Y."/>
            <person name="Zhang B."/>
            <person name="Zhuang S."/>
            <person name="Wei H."/>
            <person name="Liu B."/>
            <person name="Lei M."/>
            <person name="Yu H."/>
            <person name="Li Y."/>
            <person name="Xu H."/>
            <person name="Wei S."/>
            <person name="He X."/>
            <person name="Fang L."/>
            <person name="Zhang Z."/>
            <person name="Zhang Y."/>
            <person name="Huang X."/>
            <person name="Su Z."/>
            <person name="Tong W."/>
            <person name="Li J."/>
            <person name="Tong Z."/>
            <person name="Li S."/>
            <person name="Ye J."/>
            <person name="Wang L."/>
            <person name="Fang L."/>
            <person name="Lei T."/>
            <person name="Chen C.-S."/>
            <person name="Chen H.-C."/>
            <person name="Xu Z."/>
            <person name="Li H."/>
            <person name="Huang H."/>
            <person name="Zhang F."/>
            <person name="Xu H."/>
            <person name="Li N."/>
            <person name="Zhao C."/>
            <person name="Li S."/>
            <person name="Dong L."/>
            <person name="Huang Y."/>
            <person name="Li L."/>
            <person name="Xi Y."/>
            <person name="Qi Q."/>
            <person name="Li W."/>
            <person name="Zhang B."/>
            <person name="Hu W."/>
            <person name="Zhang Y."/>
            <person name="Tian X."/>
            <person name="Jiao Y."/>
            <person name="Liang X."/>
            <person name="Jin J."/>
            <person name="Gao L."/>
            <person name="Zheng W."/>
            <person name="Hao B."/>
            <person name="Liu S.-M."/>
            <person name="Wang W."/>
            <person name="Yuan L."/>
            <person name="Cao M."/>
            <person name="McDermott J."/>
            <person name="Samudrala R."/>
            <person name="Wang J."/>
            <person name="Wong G.K.-S."/>
            <person name="Yang H."/>
        </authorList>
    </citation>
    <scope>NUCLEOTIDE SEQUENCE [LARGE SCALE GENOMIC DNA]</scope>
    <source>
        <strain>cv. 93-11</strain>
    </source>
</reference>
<name>DRE1E_ORYSI</name>
<accession>A2XWL6</accession>
<accession>Q01JX2</accession>
<evidence type="ECO:0000250" key="1"/>
<evidence type="ECO:0000255" key="2">
    <source>
        <dbReference type="PROSITE-ProRule" id="PRU00366"/>
    </source>
</evidence>
<evidence type="ECO:0000256" key="3">
    <source>
        <dbReference type="SAM" id="MobiDB-lite"/>
    </source>
</evidence>
<evidence type="ECO:0000305" key="4"/>
<keyword id="KW-0010">Activator</keyword>
<keyword id="KW-0238">DNA-binding</keyword>
<keyword id="KW-0539">Nucleus</keyword>
<keyword id="KW-1185">Reference proteome</keyword>
<keyword id="KW-0346">Stress response</keyword>
<keyword id="KW-0804">Transcription</keyword>
<keyword id="KW-0805">Transcription regulation</keyword>
<organism>
    <name type="scientific">Oryza sativa subsp. indica</name>
    <name type="common">Rice</name>
    <dbReference type="NCBI Taxonomy" id="39946"/>
    <lineage>
        <taxon>Eukaryota</taxon>
        <taxon>Viridiplantae</taxon>
        <taxon>Streptophyta</taxon>
        <taxon>Embryophyta</taxon>
        <taxon>Tracheophyta</taxon>
        <taxon>Spermatophyta</taxon>
        <taxon>Magnoliopsida</taxon>
        <taxon>Liliopsida</taxon>
        <taxon>Poales</taxon>
        <taxon>Poaceae</taxon>
        <taxon>BOP clade</taxon>
        <taxon>Oryzoideae</taxon>
        <taxon>Oryzeae</taxon>
        <taxon>Oryzinae</taxon>
        <taxon>Oryza</taxon>
        <taxon>Oryza sativa</taxon>
    </lineage>
</organism>
<sequence>MEWAYYGSGYSSSGTPSPVGGDGDEDSYMTVSSAPPKRRAGRTKFKETRHPVYKGVRSRNPGRWVCEVREPHGKQRIWLGTFETAEMAARAHDVAAMALRGRAACLNFADSPRRLRVPPLGAGHEEIRRAAVEAAELFRPAPGQHNAAAEAAAAVAAQATAASAELFADFPCYPMDGLEFEMQGYLDMAQGMLIEPPPLAGQSTWAEEDYDCEVNLWSY</sequence>